<evidence type="ECO:0000255" key="1">
    <source>
        <dbReference type="HAMAP-Rule" id="MF_00054"/>
    </source>
</evidence>
<dbReference type="EMBL" id="CP000027">
    <property type="protein sequence ID" value="AAW40193.1"/>
    <property type="molecule type" value="Genomic_DNA"/>
</dbReference>
<dbReference type="RefSeq" id="WP_010936249.1">
    <property type="nucleotide sequence ID" value="NC_002936.3"/>
</dbReference>
<dbReference type="SMR" id="Q3Z983"/>
<dbReference type="FunCoup" id="Q3Z983">
    <property type="interactions" value="368"/>
</dbReference>
<dbReference type="STRING" id="243164.DET0472"/>
<dbReference type="GeneID" id="3230157"/>
<dbReference type="KEGG" id="det:DET0472"/>
<dbReference type="PATRIC" id="fig|243164.10.peg.450"/>
<dbReference type="eggNOG" id="COG0480">
    <property type="taxonomic scope" value="Bacteria"/>
</dbReference>
<dbReference type="HOGENOM" id="CLU_002794_4_1_0"/>
<dbReference type="InParanoid" id="Q3Z983"/>
<dbReference type="Proteomes" id="UP000008289">
    <property type="component" value="Chromosome"/>
</dbReference>
<dbReference type="GO" id="GO:0005737">
    <property type="term" value="C:cytoplasm"/>
    <property type="evidence" value="ECO:0007669"/>
    <property type="project" value="UniProtKB-SubCell"/>
</dbReference>
<dbReference type="GO" id="GO:0005525">
    <property type="term" value="F:GTP binding"/>
    <property type="evidence" value="ECO:0007669"/>
    <property type="project" value="UniProtKB-UniRule"/>
</dbReference>
<dbReference type="GO" id="GO:0003924">
    <property type="term" value="F:GTPase activity"/>
    <property type="evidence" value="ECO:0007669"/>
    <property type="project" value="InterPro"/>
</dbReference>
<dbReference type="GO" id="GO:0003746">
    <property type="term" value="F:translation elongation factor activity"/>
    <property type="evidence" value="ECO:0007669"/>
    <property type="project" value="UniProtKB-UniRule"/>
</dbReference>
<dbReference type="GO" id="GO:0032790">
    <property type="term" value="P:ribosome disassembly"/>
    <property type="evidence" value="ECO:0007669"/>
    <property type="project" value="TreeGrafter"/>
</dbReference>
<dbReference type="CDD" id="cd01886">
    <property type="entry name" value="EF-G"/>
    <property type="match status" value="1"/>
</dbReference>
<dbReference type="CDD" id="cd16262">
    <property type="entry name" value="EFG_III"/>
    <property type="match status" value="1"/>
</dbReference>
<dbReference type="CDD" id="cd01434">
    <property type="entry name" value="EFG_mtEFG1_IV"/>
    <property type="match status" value="1"/>
</dbReference>
<dbReference type="CDD" id="cd03713">
    <property type="entry name" value="EFG_mtEFG_C"/>
    <property type="match status" value="1"/>
</dbReference>
<dbReference type="CDD" id="cd04088">
    <property type="entry name" value="EFG_mtEFG_II"/>
    <property type="match status" value="1"/>
</dbReference>
<dbReference type="FunFam" id="2.40.30.10:FF:000006">
    <property type="entry name" value="Elongation factor G"/>
    <property type="match status" value="1"/>
</dbReference>
<dbReference type="FunFam" id="3.30.230.10:FF:000003">
    <property type="entry name" value="Elongation factor G"/>
    <property type="match status" value="1"/>
</dbReference>
<dbReference type="FunFam" id="3.30.70.240:FF:000001">
    <property type="entry name" value="Elongation factor G"/>
    <property type="match status" value="1"/>
</dbReference>
<dbReference type="FunFam" id="3.30.70.870:FF:000001">
    <property type="entry name" value="Elongation factor G"/>
    <property type="match status" value="1"/>
</dbReference>
<dbReference type="FunFam" id="3.40.50.300:FF:000029">
    <property type="entry name" value="Elongation factor G"/>
    <property type="match status" value="1"/>
</dbReference>
<dbReference type="Gene3D" id="3.30.230.10">
    <property type="match status" value="1"/>
</dbReference>
<dbReference type="Gene3D" id="3.30.70.240">
    <property type="match status" value="1"/>
</dbReference>
<dbReference type="Gene3D" id="3.30.70.870">
    <property type="entry name" value="Elongation Factor G (Translational Gtpase), domain 3"/>
    <property type="match status" value="1"/>
</dbReference>
<dbReference type="Gene3D" id="3.40.50.300">
    <property type="entry name" value="P-loop containing nucleotide triphosphate hydrolases"/>
    <property type="match status" value="1"/>
</dbReference>
<dbReference type="Gene3D" id="2.40.30.10">
    <property type="entry name" value="Translation factors"/>
    <property type="match status" value="1"/>
</dbReference>
<dbReference type="HAMAP" id="MF_00054_B">
    <property type="entry name" value="EF_G_EF_2_B"/>
    <property type="match status" value="1"/>
</dbReference>
<dbReference type="InterPro" id="IPR053905">
    <property type="entry name" value="EF-G-like_DII"/>
</dbReference>
<dbReference type="InterPro" id="IPR041095">
    <property type="entry name" value="EFG_II"/>
</dbReference>
<dbReference type="InterPro" id="IPR009022">
    <property type="entry name" value="EFG_III"/>
</dbReference>
<dbReference type="InterPro" id="IPR035647">
    <property type="entry name" value="EFG_III/V"/>
</dbReference>
<dbReference type="InterPro" id="IPR047872">
    <property type="entry name" value="EFG_IV"/>
</dbReference>
<dbReference type="InterPro" id="IPR035649">
    <property type="entry name" value="EFG_V"/>
</dbReference>
<dbReference type="InterPro" id="IPR000640">
    <property type="entry name" value="EFG_V-like"/>
</dbReference>
<dbReference type="InterPro" id="IPR027417">
    <property type="entry name" value="P-loop_NTPase"/>
</dbReference>
<dbReference type="InterPro" id="IPR020568">
    <property type="entry name" value="Ribosomal_Su5_D2-typ_SF"/>
</dbReference>
<dbReference type="InterPro" id="IPR014721">
    <property type="entry name" value="Ribsml_uS5_D2-typ_fold_subgr"/>
</dbReference>
<dbReference type="InterPro" id="IPR005225">
    <property type="entry name" value="Small_GTP-bd"/>
</dbReference>
<dbReference type="InterPro" id="IPR000795">
    <property type="entry name" value="T_Tr_GTP-bd_dom"/>
</dbReference>
<dbReference type="InterPro" id="IPR009000">
    <property type="entry name" value="Transl_B-barrel_sf"/>
</dbReference>
<dbReference type="InterPro" id="IPR004540">
    <property type="entry name" value="Transl_elong_EFG/EF2"/>
</dbReference>
<dbReference type="InterPro" id="IPR005517">
    <property type="entry name" value="Transl_elong_EFG/EF2_IV"/>
</dbReference>
<dbReference type="NCBIfam" id="TIGR00484">
    <property type="entry name" value="EF-G"/>
    <property type="match status" value="1"/>
</dbReference>
<dbReference type="NCBIfam" id="NF009379">
    <property type="entry name" value="PRK12740.1-3"/>
    <property type="match status" value="1"/>
</dbReference>
<dbReference type="NCBIfam" id="NF009381">
    <property type="entry name" value="PRK12740.1-5"/>
    <property type="match status" value="1"/>
</dbReference>
<dbReference type="NCBIfam" id="TIGR00231">
    <property type="entry name" value="small_GTP"/>
    <property type="match status" value="1"/>
</dbReference>
<dbReference type="PANTHER" id="PTHR43261:SF1">
    <property type="entry name" value="RIBOSOME-RELEASING FACTOR 2, MITOCHONDRIAL"/>
    <property type="match status" value="1"/>
</dbReference>
<dbReference type="PANTHER" id="PTHR43261">
    <property type="entry name" value="TRANSLATION ELONGATION FACTOR G-RELATED"/>
    <property type="match status" value="1"/>
</dbReference>
<dbReference type="Pfam" id="PF22042">
    <property type="entry name" value="EF-G_D2"/>
    <property type="match status" value="1"/>
</dbReference>
<dbReference type="Pfam" id="PF00679">
    <property type="entry name" value="EFG_C"/>
    <property type="match status" value="1"/>
</dbReference>
<dbReference type="Pfam" id="PF14492">
    <property type="entry name" value="EFG_III"/>
    <property type="match status" value="1"/>
</dbReference>
<dbReference type="Pfam" id="PF03764">
    <property type="entry name" value="EFG_IV"/>
    <property type="match status" value="1"/>
</dbReference>
<dbReference type="Pfam" id="PF00009">
    <property type="entry name" value="GTP_EFTU"/>
    <property type="match status" value="1"/>
</dbReference>
<dbReference type="PRINTS" id="PR00315">
    <property type="entry name" value="ELONGATNFCT"/>
</dbReference>
<dbReference type="SMART" id="SM00838">
    <property type="entry name" value="EFG_C"/>
    <property type="match status" value="1"/>
</dbReference>
<dbReference type="SMART" id="SM00889">
    <property type="entry name" value="EFG_IV"/>
    <property type="match status" value="1"/>
</dbReference>
<dbReference type="SUPFAM" id="SSF54980">
    <property type="entry name" value="EF-G C-terminal domain-like"/>
    <property type="match status" value="2"/>
</dbReference>
<dbReference type="SUPFAM" id="SSF52540">
    <property type="entry name" value="P-loop containing nucleoside triphosphate hydrolases"/>
    <property type="match status" value="1"/>
</dbReference>
<dbReference type="SUPFAM" id="SSF54211">
    <property type="entry name" value="Ribosomal protein S5 domain 2-like"/>
    <property type="match status" value="1"/>
</dbReference>
<dbReference type="SUPFAM" id="SSF50447">
    <property type="entry name" value="Translation proteins"/>
    <property type="match status" value="1"/>
</dbReference>
<dbReference type="PROSITE" id="PS51722">
    <property type="entry name" value="G_TR_2"/>
    <property type="match status" value="1"/>
</dbReference>
<comment type="function">
    <text evidence="1">Catalyzes the GTP-dependent ribosomal translocation step during translation elongation. During this step, the ribosome changes from the pre-translocational (PRE) to the post-translocational (POST) state as the newly formed A-site-bound peptidyl-tRNA and P-site-bound deacylated tRNA move to the P and E sites, respectively. Catalyzes the coordinated movement of the two tRNA molecules, the mRNA and conformational changes in the ribosome.</text>
</comment>
<comment type="subcellular location">
    <subcellularLocation>
        <location evidence="1">Cytoplasm</location>
    </subcellularLocation>
</comment>
<comment type="similarity">
    <text evidence="1">Belongs to the TRAFAC class translation factor GTPase superfamily. Classic translation factor GTPase family. EF-G/EF-2 subfamily.</text>
</comment>
<reference key="1">
    <citation type="journal article" date="2005" name="Science">
        <title>Genome sequence of the PCE-dechlorinating bacterium Dehalococcoides ethenogenes.</title>
        <authorList>
            <person name="Seshadri R."/>
            <person name="Adrian L."/>
            <person name="Fouts D.E."/>
            <person name="Eisen J.A."/>
            <person name="Phillippy A.M."/>
            <person name="Methe B.A."/>
            <person name="Ward N.L."/>
            <person name="Nelson W.C."/>
            <person name="DeBoy R.T."/>
            <person name="Khouri H.M."/>
            <person name="Kolonay J.F."/>
            <person name="Dodson R.J."/>
            <person name="Daugherty S.C."/>
            <person name="Brinkac L.M."/>
            <person name="Sullivan S.A."/>
            <person name="Madupu R."/>
            <person name="Nelson K.E."/>
            <person name="Kang K.H."/>
            <person name="Impraim M."/>
            <person name="Tran K."/>
            <person name="Robinson J.M."/>
            <person name="Forberger H.A."/>
            <person name="Fraser C.M."/>
            <person name="Zinder S.H."/>
            <person name="Heidelberg J.F."/>
        </authorList>
    </citation>
    <scope>NUCLEOTIDE SEQUENCE [LARGE SCALE GENOMIC DNA]</scope>
    <source>
        <strain>ATCC BAA-2266 / KCTC 15142 / 195</strain>
    </source>
</reference>
<keyword id="KW-0963">Cytoplasm</keyword>
<keyword id="KW-0251">Elongation factor</keyword>
<keyword id="KW-0342">GTP-binding</keyword>
<keyword id="KW-0547">Nucleotide-binding</keyword>
<keyword id="KW-0648">Protein biosynthesis</keyword>
<protein>
    <recommendedName>
        <fullName evidence="1">Elongation factor G</fullName>
        <shortName evidence="1">EF-G</shortName>
    </recommendedName>
</protein>
<name>EFG_DEHM1</name>
<feature type="chain" id="PRO_0000225208" description="Elongation factor G">
    <location>
        <begin position="1"/>
        <end position="693"/>
    </location>
</feature>
<feature type="domain" description="tr-type G">
    <location>
        <begin position="9"/>
        <end position="283"/>
    </location>
</feature>
<feature type="binding site" evidence="1">
    <location>
        <begin position="18"/>
        <end position="25"/>
    </location>
    <ligand>
        <name>GTP</name>
        <dbReference type="ChEBI" id="CHEBI:37565"/>
    </ligand>
</feature>
<feature type="binding site" evidence="1">
    <location>
        <begin position="82"/>
        <end position="86"/>
    </location>
    <ligand>
        <name>GTP</name>
        <dbReference type="ChEBI" id="CHEBI:37565"/>
    </ligand>
</feature>
<feature type="binding site" evidence="1">
    <location>
        <begin position="136"/>
        <end position="139"/>
    </location>
    <ligand>
        <name>GTP</name>
        <dbReference type="ChEBI" id="CHEBI:37565"/>
    </ligand>
</feature>
<proteinExistence type="inferred from homology"/>
<accession>Q3Z983</accession>
<gene>
    <name evidence="1" type="primary">fusA</name>
    <name type="ordered locus">DET0472</name>
</gene>
<sequence length="693" mass="76421">MSDRKYPLERVRNIGIIAHIDAGKTTTTERILYLTKRTHKIGNIDDGTTVMDWMEQEKARGITITSVATSAYWNGHHLNVIDTPGHVDFTVEVERSLRVLDGGVVVFDGVAGVEAQSETVWRQASRYGVPRICFINKMDRTGANYERTLGMITQRLKAKCLPLQIPIGCAETFRGSCDLLDFQCYGMDNSPEEPAETFDLPDADKERAVKFRNTMIERLAEEDDEVMEAYLAGEELPVEKLKAAIRRVCLANKAIPIFCGTSLRNKGVKRLLDAVCDYLPSPVDIPAIKGTAPKTGEPMERHASDTEPFSALAFKIVSDPFVGRLVYFRIYSGNVSAGSGVYNSTRGERERIGRLIRMHANDREEIEYADAGEIVASLGLRNTFTGDTLCDQSAPILLESIKFPEPVINLAIEPKTRSDQDKMTEGLQKLAEEDPTFKVKFDDETGQTVIYGMGELHLDVLVSRLLSEFKVNASVGKPRVAYREAITAHAKAQGKFVRQSGGRGQYGDVTIEVEPRERGAGYEFVDNVKGGAVPRNFLMAAEAGIRETLETGVYAGYPMVDVKVTAVDGSYHDVDSNENAFKMAGSMAIKAAVAKAKPILLEPIMKLEAVTPEEYMGDVIGDFNSRRGQIISVEPNPETTVITGNVPLAESFGYTTDLRSVTKGRATFSMEFESYREMPGELANQVVEAAGKK</sequence>
<organism>
    <name type="scientific">Dehalococcoides mccartyi (strain ATCC BAA-2266 / KCTC 15142 / 195)</name>
    <name type="common">Dehalococcoides ethenogenes (strain 195)</name>
    <dbReference type="NCBI Taxonomy" id="243164"/>
    <lineage>
        <taxon>Bacteria</taxon>
        <taxon>Bacillati</taxon>
        <taxon>Chloroflexota</taxon>
        <taxon>Dehalococcoidia</taxon>
        <taxon>Dehalococcoidales</taxon>
        <taxon>Dehalococcoidaceae</taxon>
        <taxon>Dehalococcoides</taxon>
    </lineage>
</organism>